<accession>Q24T29</accession>
<gene>
    <name evidence="1" type="primary">csrA</name>
    <name type="ordered locus">DSY3024</name>
</gene>
<name>CSRA_DESHY</name>
<dbReference type="EMBL" id="AP008230">
    <property type="protein sequence ID" value="BAE84813.1"/>
    <property type="molecule type" value="Genomic_DNA"/>
</dbReference>
<dbReference type="RefSeq" id="WP_011460793.1">
    <property type="nucleotide sequence ID" value="NC_007907.1"/>
</dbReference>
<dbReference type="SMR" id="Q24T29"/>
<dbReference type="STRING" id="138119.DSY3024"/>
<dbReference type="KEGG" id="dsy:DSY3024"/>
<dbReference type="eggNOG" id="COG1551">
    <property type="taxonomic scope" value="Bacteria"/>
</dbReference>
<dbReference type="HOGENOM" id="CLU_164837_0_0_9"/>
<dbReference type="Proteomes" id="UP000001946">
    <property type="component" value="Chromosome"/>
</dbReference>
<dbReference type="GO" id="GO:0005829">
    <property type="term" value="C:cytosol"/>
    <property type="evidence" value="ECO:0007669"/>
    <property type="project" value="TreeGrafter"/>
</dbReference>
<dbReference type="GO" id="GO:0048027">
    <property type="term" value="F:mRNA 5'-UTR binding"/>
    <property type="evidence" value="ECO:0007669"/>
    <property type="project" value="UniProtKB-UniRule"/>
</dbReference>
<dbReference type="GO" id="GO:0044781">
    <property type="term" value="P:bacterial-type flagellum organization"/>
    <property type="evidence" value="ECO:0007669"/>
    <property type="project" value="UniProtKB-KW"/>
</dbReference>
<dbReference type="GO" id="GO:0006402">
    <property type="term" value="P:mRNA catabolic process"/>
    <property type="evidence" value="ECO:0007669"/>
    <property type="project" value="InterPro"/>
</dbReference>
<dbReference type="GO" id="GO:0045947">
    <property type="term" value="P:negative regulation of translational initiation"/>
    <property type="evidence" value="ECO:0007669"/>
    <property type="project" value="UniProtKB-UniRule"/>
</dbReference>
<dbReference type="GO" id="GO:1902208">
    <property type="term" value="P:regulation of bacterial-type flagellum assembly"/>
    <property type="evidence" value="ECO:0007669"/>
    <property type="project" value="UniProtKB-UniRule"/>
</dbReference>
<dbReference type="GO" id="GO:0006109">
    <property type="term" value="P:regulation of carbohydrate metabolic process"/>
    <property type="evidence" value="ECO:0007669"/>
    <property type="project" value="InterPro"/>
</dbReference>
<dbReference type="FunFam" id="2.60.40.4380:FF:000002">
    <property type="entry name" value="Translational regulator CsrA"/>
    <property type="match status" value="1"/>
</dbReference>
<dbReference type="Gene3D" id="2.60.40.4380">
    <property type="entry name" value="Translational regulator CsrA"/>
    <property type="match status" value="1"/>
</dbReference>
<dbReference type="HAMAP" id="MF_00167">
    <property type="entry name" value="CsrA"/>
    <property type="match status" value="1"/>
</dbReference>
<dbReference type="InterPro" id="IPR003751">
    <property type="entry name" value="CsrA"/>
</dbReference>
<dbReference type="InterPro" id="IPR036107">
    <property type="entry name" value="CsrA_sf"/>
</dbReference>
<dbReference type="NCBIfam" id="TIGR00202">
    <property type="entry name" value="csrA"/>
    <property type="match status" value="1"/>
</dbReference>
<dbReference type="NCBIfam" id="NF002469">
    <property type="entry name" value="PRK01712.1"/>
    <property type="match status" value="1"/>
</dbReference>
<dbReference type="PANTHER" id="PTHR34984">
    <property type="entry name" value="CARBON STORAGE REGULATOR"/>
    <property type="match status" value="1"/>
</dbReference>
<dbReference type="PANTHER" id="PTHR34984:SF1">
    <property type="entry name" value="CARBON STORAGE REGULATOR"/>
    <property type="match status" value="1"/>
</dbReference>
<dbReference type="Pfam" id="PF02599">
    <property type="entry name" value="CsrA"/>
    <property type="match status" value="1"/>
</dbReference>
<dbReference type="SUPFAM" id="SSF117130">
    <property type="entry name" value="CsrA-like"/>
    <property type="match status" value="1"/>
</dbReference>
<proteinExistence type="inferred from homology"/>
<sequence length="77" mass="8523">MLALTRKAGERIVIGDNIVVTVVSIKGDSIRLTIDAPKEVKIYRGEIYDAIAAENKEAAVPMDLTELTALKEFHIRK</sequence>
<feature type="chain" id="PRO_1000023377" description="Translational regulator CsrA">
    <location>
        <begin position="1"/>
        <end position="77"/>
    </location>
</feature>
<evidence type="ECO:0000255" key="1">
    <source>
        <dbReference type="HAMAP-Rule" id="MF_00167"/>
    </source>
</evidence>
<keyword id="KW-1005">Bacterial flagellum biogenesis</keyword>
<keyword id="KW-0963">Cytoplasm</keyword>
<keyword id="KW-1185">Reference proteome</keyword>
<keyword id="KW-0678">Repressor</keyword>
<keyword id="KW-0694">RNA-binding</keyword>
<keyword id="KW-0810">Translation regulation</keyword>
<organism>
    <name type="scientific">Desulfitobacterium hafniense (strain Y51)</name>
    <dbReference type="NCBI Taxonomy" id="138119"/>
    <lineage>
        <taxon>Bacteria</taxon>
        <taxon>Bacillati</taxon>
        <taxon>Bacillota</taxon>
        <taxon>Clostridia</taxon>
        <taxon>Eubacteriales</taxon>
        <taxon>Desulfitobacteriaceae</taxon>
        <taxon>Desulfitobacterium</taxon>
    </lineage>
</organism>
<protein>
    <recommendedName>
        <fullName evidence="1">Translational regulator CsrA</fullName>
    </recommendedName>
</protein>
<comment type="function">
    <text evidence="1">A translational regulator that binds mRNA to regulate translation initiation and/or mRNA stability. Usually binds in the 5'-UTR at or near the Shine-Dalgarno sequence preventing ribosome-binding, thus repressing translation. Its main target seems to be the major flagellin gene, while its function is anatagonized by FliW.</text>
</comment>
<comment type="subunit">
    <text evidence="1">Homodimer; the beta-strands of each monomer intercalate to form a hydrophobic core, while the alpha-helices form wings that extend away from the core.</text>
</comment>
<comment type="subcellular location">
    <subcellularLocation>
        <location evidence="1">Cytoplasm</location>
    </subcellularLocation>
</comment>
<comment type="similarity">
    <text evidence="1">Belongs to the CsrA/RsmA family.</text>
</comment>
<reference key="1">
    <citation type="journal article" date="2006" name="J. Bacteriol.">
        <title>Complete genome sequence of the dehalorespiring bacterium Desulfitobacterium hafniense Y51 and comparison with Dehalococcoides ethenogenes 195.</title>
        <authorList>
            <person name="Nonaka H."/>
            <person name="Keresztes G."/>
            <person name="Shinoda Y."/>
            <person name="Ikenaga Y."/>
            <person name="Abe M."/>
            <person name="Naito K."/>
            <person name="Inatomi K."/>
            <person name="Furukawa K."/>
            <person name="Inui M."/>
            <person name="Yukawa H."/>
        </authorList>
    </citation>
    <scope>NUCLEOTIDE SEQUENCE [LARGE SCALE GENOMIC DNA]</scope>
    <source>
        <strain>Y51</strain>
    </source>
</reference>